<reference key="1">
    <citation type="journal article" date="2005" name="BMC Genomics">
        <title>Characterization of 954 bovine full-CDS cDNA sequences.</title>
        <authorList>
            <person name="Harhay G.P."/>
            <person name="Sonstegard T.S."/>
            <person name="Keele J.W."/>
            <person name="Heaton M.P."/>
            <person name="Clawson M.L."/>
            <person name="Snelling W.M."/>
            <person name="Wiedmann R.T."/>
            <person name="Van Tassell C.P."/>
            <person name="Smith T.P.L."/>
        </authorList>
    </citation>
    <scope>NUCLEOTIDE SEQUENCE [LARGE SCALE MRNA]</scope>
</reference>
<reference key="2">
    <citation type="submission" date="2005-08" db="EMBL/GenBank/DDBJ databases">
        <authorList>
            <consortium name="NIH - Mammalian Gene Collection (MGC) project"/>
        </authorList>
    </citation>
    <scope>NUCLEOTIDE SEQUENCE [LARGE SCALE MRNA]</scope>
    <source>
        <strain>Crossbred X Angus</strain>
        <tissue>Ileum</tissue>
    </source>
</reference>
<comment type="function">
    <text evidence="1">Component of the DRB sensitivity-inducing factor complex (DSIF complex), which regulates mRNA processing and transcription elongation by RNA polymerase II. DSIF positively regulates mRNA capping by stimulating the mRNA guanylyltransferase activity of RNGTT/CAP1A. DSIF also acts cooperatively with the negative elongation factor complex (NELF complex) to enhance transcriptional pausing at sites proximal to the promoter. Transcriptional pausing may facilitate the assembly of an elongation competent RNA polymerase II complex. DSIF and NELF promote pausing by inhibition of the transcription elongation factor TFIIS/S-II. TFIIS/S-II binds to RNA polymerase II at transcription pause sites and stimulates the weak intrinsic nuclease activity of the enzyme. Cleavage of blocked transcripts by RNA polymerase II promotes the resumption of transcription from the new 3' terminus and may allow repeated attempts at transcription through natural pause sites (By similarity).</text>
</comment>
<comment type="subunit">
    <text evidence="1">Interacts with SUPT5H to form DSIF. DSIF interacts with the positive transcription elongation factor b complex (P-TEFb complex), which is composed of CDK9 and cyclin-T (CCNT1 or CCNT2). DSIF interacts with RNA polymerase II, and this interaction is reduced by phosphorylation of the C-terminal domain (CTD) of POLR2A by P-TEFb. DSIF also interacts with the NELF complex, which is composed of NELFA, NELFB, NELFD and NELFE, and this interaction occurs following prior binding of DSIF to RNA polymerase II. DSIF also interacts with PRMT1/HRMT1L2, HTATSF1/TATSF1, RNGTT/CAP1A, PRMT5/SKB1, SUPT6H, and can interact with PIN1 (By similarity).</text>
</comment>
<comment type="subcellular location">
    <subcellularLocation>
        <location evidence="1">Nucleus</location>
    </subcellularLocation>
</comment>
<comment type="PTM">
    <text evidence="2">Ubiquitinated by UBR5 when not assembled in the DSIF complex, leading to its degradation: UBR5 recognizes and binds a degron that is not accessible when SUPT4H1 is part of the DSIF complex.</text>
</comment>
<comment type="similarity">
    <text evidence="4">Belongs to the SPT4 family.</text>
</comment>
<keyword id="KW-0007">Acetylation</keyword>
<keyword id="KW-0010">Activator</keyword>
<keyword id="KW-0479">Metal-binding</keyword>
<keyword id="KW-0539">Nucleus</keyword>
<keyword id="KW-1185">Reference proteome</keyword>
<keyword id="KW-0678">Repressor</keyword>
<keyword id="KW-0804">Transcription</keyword>
<keyword id="KW-0805">Transcription regulation</keyword>
<keyword id="KW-0832">Ubl conjugation</keyword>
<keyword id="KW-0862">Zinc</keyword>
<keyword id="KW-0863">Zinc-finger</keyword>
<evidence type="ECO:0000250" key="1"/>
<evidence type="ECO:0000250" key="2">
    <source>
        <dbReference type="UniProtKB" id="P63272"/>
    </source>
</evidence>
<evidence type="ECO:0000255" key="3"/>
<evidence type="ECO:0000305" key="4"/>
<dbReference type="EMBL" id="BT025461">
    <property type="protein sequence ID" value="ABF57417.1"/>
    <property type="molecule type" value="mRNA"/>
</dbReference>
<dbReference type="EMBL" id="BC103340">
    <property type="protein sequence ID" value="AAI03341.1"/>
    <property type="molecule type" value="mRNA"/>
</dbReference>
<dbReference type="RefSeq" id="NP_001029964.1">
    <property type="nucleotide sequence ID" value="NM_001034792.2"/>
</dbReference>
<dbReference type="SMR" id="Q3SYX6"/>
<dbReference type="FunCoup" id="Q3SYX6">
    <property type="interactions" value="2492"/>
</dbReference>
<dbReference type="STRING" id="9913.ENSBTAP00000066579"/>
<dbReference type="PaxDb" id="9913-ENSBTAP00000004389"/>
<dbReference type="Ensembl" id="ENSBTAT00000089056.1">
    <property type="protein sequence ID" value="ENSBTAP00000093554.1"/>
    <property type="gene ID" value="ENSBTAG00000063664.1"/>
</dbReference>
<dbReference type="GeneID" id="616425"/>
<dbReference type="KEGG" id="bta:616425"/>
<dbReference type="CTD" id="6827"/>
<dbReference type="eggNOG" id="KOG3490">
    <property type="taxonomic scope" value="Eukaryota"/>
</dbReference>
<dbReference type="GeneTree" id="ENSGT00390000018559"/>
<dbReference type="HOGENOM" id="CLU_138052_3_0_1"/>
<dbReference type="InParanoid" id="Q3SYX6"/>
<dbReference type="OrthoDB" id="248751at2759"/>
<dbReference type="TreeFam" id="TF300105"/>
<dbReference type="Proteomes" id="UP000009136">
    <property type="component" value="Chromosome 19"/>
</dbReference>
<dbReference type="GO" id="GO:0032044">
    <property type="term" value="C:DSIF complex"/>
    <property type="evidence" value="ECO:0000250"/>
    <property type="project" value="UniProtKB"/>
</dbReference>
<dbReference type="GO" id="GO:0046982">
    <property type="term" value="F:protein heterodimerization activity"/>
    <property type="evidence" value="ECO:0007669"/>
    <property type="project" value="Ensembl"/>
</dbReference>
<dbReference type="GO" id="GO:0000993">
    <property type="term" value="F:RNA polymerase II complex binding"/>
    <property type="evidence" value="ECO:0000318"/>
    <property type="project" value="GO_Central"/>
</dbReference>
<dbReference type="GO" id="GO:0008270">
    <property type="term" value="F:zinc ion binding"/>
    <property type="evidence" value="ECO:0007669"/>
    <property type="project" value="UniProtKB-KW"/>
</dbReference>
<dbReference type="GO" id="GO:0000122">
    <property type="term" value="P:negative regulation of transcription by RNA polymerase II"/>
    <property type="evidence" value="ECO:0007669"/>
    <property type="project" value="Ensembl"/>
</dbReference>
<dbReference type="GO" id="GO:0034244">
    <property type="term" value="P:negative regulation of transcription elongation by RNA polymerase II"/>
    <property type="evidence" value="ECO:0007669"/>
    <property type="project" value="Ensembl"/>
</dbReference>
<dbReference type="GO" id="GO:0032786">
    <property type="term" value="P:positive regulation of DNA-templated transcription, elongation"/>
    <property type="evidence" value="ECO:0007669"/>
    <property type="project" value="Ensembl"/>
</dbReference>
<dbReference type="GO" id="GO:0045944">
    <property type="term" value="P:positive regulation of transcription by RNA polymerase II"/>
    <property type="evidence" value="ECO:0007669"/>
    <property type="project" value="Ensembl"/>
</dbReference>
<dbReference type="GO" id="GO:0006368">
    <property type="term" value="P:transcription elongation by RNA polymerase II"/>
    <property type="evidence" value="ECO:0000318"/>
    <property type="project" value="GO_Central"/>
</dbReference>
<dbReference type="GO" id="GO:0140673">
    <property type="term" value="P:transcription elongation-coupled chromatin remodeling"/>
    <property type="evidence" value="ECO:0007669"/>
    <property type="project" value="InterPro"/>
</dbReference>
<dbReference type="CDD" id="cd07973">
    <property type="entry name" value="Spt4"/>
    <property type="match status" value="1"/>
</dbReference>
<dbReference type="FunFam" id="3.30.40.210:FF:000006">
    <property type="entry name" value="Transcription elongation factor SPT4"/>
    <property type="match status" value="1"/>
</dbReference>
<dbReference type="Gene3D" id="3.30.40.210">
    <property type="match status" value="1"/>
</dbReference>
<dbReference type="InterPro" id="IPR029040">
    <property type="entry name" value="RPABC4/Spt4"/>
</dbReference>
<dbReference type="InterPro" id="IPR009287">
    <property type="entry name" value="Spt4"/>
</dbReference>
<dbReference type="InterPro" id="IPR022800">
    <property type="entry name" value="Spt4/RpoE2_Znf"/>
</dbReference>
<dbReference type="InterPro" id="IPR038510">
    <property type="entry name" value="Spt4_sf"/>
</dbReference>
<dbReference type="PANTHER" id="PTHR12882">
    <property type="entry name" value="SUPPRESSOR OF TY 4"/>
    <property type="match status" value="1"/>
</dbReference>
<dbReference type="PANTHER" id="PTHR12882:SF1">
    <property type="entry name" value="TRANSCRIPTION ELONGATION FACTOR SPT4"/>
    <property type="match status" value="1"/>
</dbReference>
<dbReference type="Pfam" id="PF06093">
    <property type="entry name" value="Spt4"/>
    <property type="match status" value="1"/>
</dbReference>
<dbReference type="PIRSF" id="PIRSF025023">
    <property type="entry name" value="Spt4"/>
    <property type="match status" value="1"/>
</dbReference>
<dbReference type="SMART" id="SM01389">
    <property type="entry name" value="Spt4"/>
    <property type="match status" value="1"/>
</dbReference>
<dbReference type="SUPFAM" id="SSF63393">
    <property type="entry name" value="RNA polymerase subunits"/>
    <property type="match status" value="1"/>
</dbReference>
<protein>
    <recommendedName>
        <fullName>Transcription elongation factor SPT4</fullName>
    </recommendedName>
    <alternativeName>
        <fullName>DRB sensitivity-inducing factor small subunit</fullName>
        <shortName>DSIF small subunit</shortName>
    </alternativeName>
</protein>
<name>SPT4H_BOVIN</name>
<gene>
    <name type="primary">SUPT4H1</name>
</gene>
<proteinExistence type="inferred from homology"/>
<sequence>MALETVPKDLRHLRACLLCSLVKTIDQFEYDGCDNCDAYLQMKGNREMVYDCTSSSFDGIIAMMSPEDSWVSKWQRVSNFKPGVYAVSVTGRLPQGIVRELKSRGVAYKSRDTAIKT</sequence>
<accession>Q3SYX6</accession>
<feature type="initiator methionine" description="Removed" evidence="2">
    <location>
        <position position="1"/>
    </location>
</feature>
<feature type="chain" id="PRO_0000246082" description="Transcription elongation factor SPT4">
    <location>
        <begin position="2"/>
        <end position="117"/>
    </location>
</feature>
<feature type="zinc finger region" description="C4-type" evidence="3">
    <location>
        <begin position="16"/>
        <end position="36"/>
    </location>
</feature>
<feature type="region of interest" description="Interaction with SUPT5H" evidence="1">
    <location>
        <begin position="2"/>
        <end position="40"/>
    </location>
</feature>
<feature type="modified residue" description="N-acetylalanine" evidence="2">
    <location>
        <position position="2"/>
    </location>
</feature>
<organism>
    <name type="scientific">Bos taurus</name>
    <name type="common">Bovine</name>
    <dbReference type="NCBI Taxonomy" id="9913"/>
    <lineage>
        <taxon>Eukaryota</taxon>
        <taxon>Metazoa</taxon>
        <taxon>Chordata</taxon>
        <taxon>Craniata</taxon>
        <taxon>Vertebrata</taxon>
        <taxon>Euteleostomi</taxon>
        <taxon>Mammalia</taxon>
        <taxon>Eutheria</taxon>
        <taxon>Laurasiatheria</taxon>
        <taxon>Artiodactyla</taxon>
        <taxon>Ruminantia</taxon>
        <taxon>Pecora</taxon>
        <taxon>Bovidae</taxon>
        <taxon>Bovinae</taxon>
        <taxon>Bos</taxon>
    </lineage>
</organism>